<comment type="function">
    <text evidence="1">Involved in cell division and chromosome segregation.</text>
</comment>
<comment type="similarity">
    <text evidence="1">Belongs to the WhiA family.</text>
</comment>
<name>WHIA_HALOH</name>
<protein>
    <recommendedName>
        <fullName evidence="1">Probable cell division protein WhiA</fullName>
    </recommendedName>
</protein>
<evidence type="ECO:0000255" key="1">
    <source>
        <dbReference type="HAMAP-Rule" id="MF_01420"/>
    </source>
</evidence>
<accession>B8CYG6</accession>
<proteinExistence type="inferred from homology"/>
<feature type="chain" id="PRO_0000376489" description="Probable cell division protein WhiA">
    <location>
        <begin position="1"/>
        <end position="313"/>
    </location>
</feature>
<feature type="DNA-binding region" description="H-T-H motif" evidence="1">
    <location>
        <begin position="278"/>
        <end position="311"/>
    </location>
</feature>
<keyword id="KW-0131">Cell cycle</keyword>
<keyword id="KW-0132">Cell division</keyword>
<keyword id="KW-0238">DNA-binding</keyword>
<keyword id="KW-1185">Reference proteome</keyword>
<organism>
    <name type="scientific">Halothermothrix orenii (strain H 168 / OCM 544 / DSM 9562)</name>
    <dbReference type="NCBI Taxonomy" id="373903"/>
    <lineage>
        <taxon>Bacteria</taxon>
        <taxon>Bacillati</taxon>
        <taxon>Bacillota</taxon>
        <taxon>Clostridia</taxon>
        <taxon>Halanaerobiales</taxon>
        <taxon>Halothermotrichaceae</taxon>
        <taxon>Halothermothrix</taxon>
    </lineage>
</organism>
<dbReference type="EMBL" id="CP001098">
    <property type="protein sequence ID" value="ACL70335.1"/>
    <property type="molecule type" value="Genomic_DNA"/>
</dbReference>
<dbReference type="RefSeq" id="WP_012636518.1">
    <property type="nucleotide sequence ID" value="NC_011899.1"/>
</dbReference>
<dbReference type="SMR" id="B8CYG6"/>
<dbReference type="STRING" id="373903.Hore_15860"/>
<dbReference type="KEGG" id="hor:Hore_15860"/>
<dbReference type="eggNOG" id="COG1481">
    <property type="taxonomic scope" value="Bacteria"/>
</dbReference>
<dbReference type="HOGENOM" id="CLU_053282_0_0_9"/>
<dbReference type="OrthoDB" id="401278at2"/>
<dbReference type="Proteomes" id="UP000000719">
    <property type="component" value="Chromosome"/>
</dbReference>
<dbReference type="GO" id="GO:0003677">
    <property type="term" value="F:DNA binding"/>
    <property type="evidence" value="ECO:0007669"/>
    <property type="project" value="UniProtKB-UniRule"/>
</dbReference>
<dbReference type="GO" id="GO:0004519">
    <property type="term" value="F:endonuclease activity"/>
    <property type="evidence" value="ECO:0007669"/>
    <property type="project" value="InterPro"/>
</dbReference>
<dbReference type="GO" id="GO:0051301">
    <property type="term" value="P:cell division"/>
    <property type="evidence" value="ECO:0007669"/>
    <property type="project" value="UniProtKB-UniRule"/>
</dbReference>
<dbReference type="GO" id="GO:0043937">
    <property type="term" value="P:regulation of sporulation"/>
    <property type="evidence" value="ECO:0007669"/>
    <property type="project" value="InterPro"/>
</dbReference>
<dbReference type="Gene3D" id="3.10.28.10">
    <property type="entry name" value="Homing endonucleases"/>
    <property type="match status" value="1"/>
</dbReference>
<dbReference type="HAMAP" id="MF_01420">
    <property type="entry name" value="HTH_type_WhiA"/>
    <property type="match status" value="1"/>
</dbReference>
<dbReference type="InterPro" id="IPR027434">
    <property type="entry name" value="Homing_endonucl"/>
</dbReference>
<dbReference type="InterPro" id="IPR004042">
    <property type="entry name" value="Intein_endonuc_central"/>
</dbReference>
<dbReference type="InterPro" id="IPR018478">
    <property type="entry name" value="Sporu_reg_WhiA_N_dom"/>
</dbReference>
<dbReference type="InterPro" id="IPR003802">
    <property type="entry name" value="Sporulation_regulator_WhiA"/>
</dbReference>
<dbReference type="InterPro" id="IPR023054">
    <property type="entry name" value="Sporulation_regulator_WhiA_C"/>
</dbReference>
<dbReference type="InterPro" id="IPR039518">
    <property type="entry name" value="WhiA_LAGLIDADG_dom"/>
</dbReference>
<dbReference type="NCBIfam" id="TIGR00647">
    <property type="entry name" value="DNA_bind_WhiA"/>
    <property type="match status" value="1"/>
</dbReference>
<dbReference type="PANTHER" id="PTHR37307">
    <property type="entry name" value="CELL DIVISION PROTEIN WHIA-RELATED"/>
    <property type="match status" value="1"/>
</dbReference>
<dbReference type="PANTHER" id="PTHR37307:SF1">
    <property type="entry name" value="CELL DIVISION PROTEIN WHIA-RELATED"/>
    <property type="match status" value="1"/>
</dbReference>
<dbReference type="Pfam" id="PF02650">
    <property type="entry name" value="HTH_WhiA"/>
    <property type="match status" value="1"/>
</dbReference>
<dbReference type="Pfam" id="PF14527">
    <property type="entry name" value="LAGLIDADG_WhiA"/>
    <property type="match status" value="1"/>
</dbReference>
<dbReference type="Pfam" id="PF10298">
    <property type="entry name" value="WhiA_N"/>
    <property type="match status" value="1"/>
</dbReference>
<dbReference type="SUPFAM" id="SSF55608">
    <property type="entry name" value="Homing endonucleases"/>
    <property type="match status" value="1"/>
</dbReference>
<dbReference type="PROSITE" id="PS50819">
    <property type="entry name" value="INTEIN_ENDONUCLEASE"/>
    <property type="match status" value="1"/>
</dbReference>
<reference key="1">
    <citation type="journal article" date="2009" name="PLoS ONE">
        <title>Genome analysis of the anaerobic thermohalophilic bacterium Halothermothrix orenii.</title>
        <authorList>
            <person name="Mavromatis K."/>
            <person name="Ivanova N."/>
            <person name="Anderson I."/>
            <person name="Lykidis A."/>
            <person name="Hooper S.D."/>
            <person name="Sun H."/>
            <person name="Kunin V."/>
            <person name="Lapidus A."/>
            <person name="Hugenholtz P."/>
            <person name="Patel B."/>
            <person name="Kyrpides N.C."/>
        </authorList>
    </citation>
    <scope>NUCLEOTIDE SEQUENCE [LARGE SCALE GENOMIC DNA]</scope>
    <source>
        <strain>H 168 / OCM 544 / DSM 9562</strain>
    </source>
</reference>
<sequence>MSFTDQVKHEVSRLESNNKMCQLAELSALIMMNGSIQIINKNLAVKVRLYHGDLARKVYKLIKERFELNIEIMVRRRNHFSTYQNIYDLFLPPQPGIEVFLKKVGVLDEDHNLLFRIKKELVTSKSCQKSYVRGAFLGGGSVNNPRGEYHLEFRCEHESFAEDLLMLLKRFGLEGHLTEHRKKYVVYFKSFSEVATILNIIGAHKALLKLEDNKVLKEVKNGVNRRVNCETANLDKTVKAAMLQLEDIELIEKTRGLETLSNSLQEIAIIRKKYPYASLKELGKLLDPPLSKSGVNHRLRRIKSIANEIRGER</sequence>
<gene>
    <name evidence="1" type="primary">whiA</name>
    <name type="ordered locus">Hore_15860</name>
</gene>